<evidence type="ECO:0000255" key="1">
    <source>
        <dbReference type="HAMAP-Rule" id="MF_01369"/>
    </source>
</evidence>
<evidence type="ECO:0000305" key="2"/>
<name>RL23_BACCR</name>
<accession>Q81J40</accession>
<dbReference type="EMBL" id="AE016877">
    <property type="protein sequence ID" value="AAP07214.1"/>
    <property type="molecule type" value="Genomic_DNA"/>
</dbReference>
<dbReference type="RefSeq" id="NP_830013.1">
    <property type="nucleotide sequence ID" value="NC_004722.1"/>
</dbReference>
<dbReference type="RefSeq" id="WP_001205558.1">
    <property type="nucleotide sequence ID" value="NZ_CP138336.1"/>
</dbReference>
<dbReference type="SMR" id="Q81J40"/>
<dbReference type="STRING" id="226900.BC_0133"/>
<dbReference type="GeneID" id="93010941"/>
<dbReference type="KEGG" id="bce:BC0133"/>
<dbReference type="PATRIC" id="fig|226900.8.peg.134"/>
<dbReference type="HOGENOM" id="CLU_037562_3_2_9"/>
<dbReference type="OrthoDB" id="9793353at2"/>
<dbReference type="PRO" id="PR:Q81J40"/>
<dbReference type="Proteomes" id="UP000001417">
    <property type="component" value="Chromosome"/>
</dbReference>
<dbReference type="GO" id="GO:0022625">
    <property type="term" value="C:cytosolic large ribosomal subunit"/>
    <property type="evidence" value="ECO:0000318"/>
    <property type="project" value="GO_Central"/>
</dbReference>
<dbReference type="GO" id="GO:0019843">
    <property type="term" value="F:rRNA binding"/>
    <property type="evidence" value="ECO:0007669"/>
    <property type="project" value="UniProtKB-UniRule"/>
</dbReference>
<dbReference type="GO" id="GO:0003735">
    <property type="term" value="F:structural constituent of ribosome"/>
    <property type="evidence" value="ECO:0000318"/>
    <property type="project" value="GO_Central"/>
</dbReference>
<dbReference type="GO" id="GO:0006412">
    <property type="term" value="P:translation"/>
    <property type="evidence" value="ECO:0007669"/>
    <property type="project" value="UniProtKB-UniRule"/>
</dbReference>
<dbReference type="FunFam" id="3.30.70.330:FF:000001">
    <property type="entry name" value="50S ribosomal protein L23"/>
    <property type="match status" value="1"/>
</dbReference>
<dbReference type="Gene3D" id="3.30.70.330">
    <property type="match status" value="1"/>
</dbReference>
<dbReference type="HAMAP" id="MF_01369_B">
    <property type="entry name" value="Ribosomal_uL23_B"/>
    <property type="match status" value="1"/>
</dbReference>
<dbReference type="InterPro" id="IPR012677">
    <property type="entry name" value="Nucleotide-bd_a/b_plait_sf"/>
</dbReference>
<dbReference type="InterPro" id="IPR013025">
    <property type="entry name" value="Ribosomal_uL23-like"/>
</dbReference>
<dbReference type="InterPro" id="IPR012678">
    <property type="entry name" value="Ribosomal_uL23/eL15/eS24_sf"/>
</dbReference>
<dbReference type="InterPro" id="IPR001014">
    <property type="entry name" value="Ribosomal_uL23_CS"/>
</dbReference>
<dbReference type="NCBIfam" id="NF004363">
    <property type="entry name" value="PRK05738.2-4"/>
    <property type="match status" value="1"/>
</dbReference>
<dbReference type="PANTHER" id="PTHR11620">
    <property type="entry name" value="60S RIBOSOMAL PROTEIN L23A"/>
    <property type="match status" value="1"/>
</dbReference>
<dbReference type="Pfam" id="PF00276">
    <property type="entry name" value="Ribosomal_L23"/>
    <property type="match status" value="1"/>
</dbReference>
<dbReference type="SUPFAM" id="SSF54189">
    <property type="entry name" value="Ribosomal proteins S24e, L23 and L15e"/>
    <property type="match status" value="1"/>
</dbReference>
<dbReference type="PROSITE" id="PS00050">
    <property type="entry name" value="RIBOSOMAL_L23"/>
    <property type="match status" value="1"/>
</dbReference>
<feature type="chain" id="PRO_0000272699" description="Large ribosomal subunit protein uL23">
    <location>
        <begin position="1"/>
        <end position="96"/>
    </location>
</feature>
<gene>
    <name evidence="1" type="primary">rplW</name>
    <name type="ordered locus">BC_0133</name>
</gene>
<keyword id="KW-1185">Reference proteome</keyword>
<keyword id="KW-0687">Ribonucleoprotein</keyword>
<keyword id="KW-0689">Ribosomal protein</keyword>
<keyword id="KW-0694">RNA-binding</keyword>
<keyword id="KW-0699">rRNA-binding</keyword>
<sequence length="96" mass="11114">MRDPRDIIKRPVITERSMEMMAEKKYTFDVDVKSNKTEVKDALEAIFGVKVEKVNIMNYKPKAKRVGRHAGFTSRRRKAIVKLTADSKEIEIFQGV</sequence>
<proteinExistence type="inferred from homology"/>
<protein>
    <recommendedName>
        <fullName evidence="1">Large ribosomal subunit protein uL23</fullName>
    </recommendedName>
    <alternativeName>
        <fullName evidence="2">50S ribosomal protein L23</fullName>
    </alternativeName>
</protein>
<comment type="function">
    <text evidence="1">One of the early assembly proteins it binds 23S rRNA. One of the proteins that surrounds the polypeptide exit tunnel on the outside of the ribosome. Forms the main docking site for trigger factor binding to the ribosome.</text>
</comment>
<comment type="subunit">
    <text evidence="1">Part of the 50S ribosomal subunit. Contacts protein L29, and trigger factor when it is bound to the ribosome.</text>
</comment>
<comment type="similarity">
    <text evidence="1">Belongs to the universal ribosomal protein uL23 family.</text>
</comment>
<reference key="1">
    <citation type="journal article" date="2003" name="Nature">
        <title>Genome sequence of Bacillus cereus and comparative analysis with Bacillus anthracis.</title>
        <authorList>
            <person name="Ivanova N."/>
            <person name="Sorokin A."/>
            <person name="Anderson I."/>
            <person name="Galleron N."/>
            <person name="Candelon B."/>
            <person name="Kapatral V."/>
            <person name="Bhattacharyya A."/>
            <person name="Reznik G."/>
            <person name="Mikhailova N."/>
            <person name="Lapidus A."/>
            <person name="Chu L."/>
            <person name="Mazur M."/>
            <person name="Goltsman E."/>
            <person name="Larsen N."/>
            <person name="D'Souza M."/>
            <person name="Walunas T."/>
            <person name="Grechkin Y."/>
            <person name="Pusch G."/>
            <person name="Haselkorn R."/>
            <person name="Fonstein M."/>
            <person name="Ehrlich S.D."/>
            <person name="Overbeek R."/>
            <person name="Kyrpides N.C."/>
        </authorList>
    </citation>
    <scope>NUCLEOTIDE SEQUENCE [LARGE SCALE GENOMIC DNA]</scope>
    <source>
        <strain>ATCC 14579 / DSM 31 / CCUG 7414 / JCM 2152 / NBRC 15305 / NCIMB 9373 / NCTC 2599 / NRRL B-3711</strain>
    </source>
</reference>
<organism>
    <name type="scientific">Bacillus cereus (strain ATCC 14579 / DSM 31 / CCUG 7414 / JCM 2152 / NBRC 15305 / NCIMB 9373 / NCTC 2599 / NRRL B-3711)</name>
    <dbReference type="NCBI Taxonomy" id="226900"/>
    <lineage>
        <taxon>Bacteria</taxon>
        <taxon>Bacillati</taxon>
        <taxon>Bacillota</taxon>
        <taxon>Bacilli</taxon>
        <taxon>Bacillales</taxon>
        <taxon>Bacillaceae</taxon>
        <taxon>Bacillus</taxon>
        <taxon>Bacillus cereus group</taxon>
    </lineage>
</organism>